<dbReference type="EC" id="4.1.1.48" evidence="1"/>
<dbReference type="EMBL" id="CP001025">
    <property type="protein sequence ID" value="ACB62957.1"/>
    <property type="molecule type" value="Genomic_DNA"/>
</dbReference>
<dbReference type="RefSeq" id="WP_012363009.1">
    <property type="nucleotide sequence ID" value="NC_010551.1"/>
</dbReference>
<dbReference type="SMR" id="B1YSF5"/>
<dbReference type="KEGG" id="bac:BamMC406_0460"/>
<dbReference type="HOGENOM" id="CLU_034247_2_0_4"/>
<dbReference type="OrthoDB" id="9804217at2"/>
<dbReference type="UniPathway" id="UPA00035">
    <property type="reaction ID" value="UER00043"/>
</dbReference>
<dbReference type="Proteomes" id="UP000001680">
    <property type="component" value="Chromosome 1"/>
</dbReference>
<dbReference type="GO" id="GO:0004425">
    <property type="term" value="F:indole-3-glycerol-phosphate synthase activity"/>
    <property type="evidence" value="ECO:0007669"/>
    <property type="project" value="UniProtKB-UniRule"/>
</dbReference>
<dbReference type="GO" id="GO:0004640">
    <property type="term" value="F:phosphoribosylanthranilate isomerase activity"/>
    <property type="evidence" value="ECO:0007669"/>
    <property type="project" value="TreeGrafter"/>
</dbReference>
<dbReference type="GO" id="GO:0000162">
    <property type="term" value="P:L-tryptophan biosynthetic process"/>
    <property type="evidence" value="ECO:0007669"/>
    <property type="project" value="UniProtKB-UniRule"/>
</dbReference>
<dbReference type="CDD" id="cd00331">
    <property type="entry name" value="IGPS"/>
    <property type="match status" value="1"/>
</dbReference>
<dbReference type="FunFam" id="3.20.20.70:FF:000024">
    <property type="entry name" value="Indole-3-glycerol phosphate synthase"/>
    <property type="match status" value="1"/>
</dbReference>
<dbReference type="Gene3D" id="3.20.20.70">
    <property type="entry name" value="Aldolase class I"/>
    <property type="match status" value="1"/>
</dbReference>
<dbReference type="HAMAP" id="MF_00134_B">
    <property type="entry name" value="IGPS_B"/>
    <property type="match status" value="1"/>
</dbReference>
<dbReference type="InterPro" id="IPR013785">
    <property type="entry name" value="Aldolase_TIM"/>
</dbReference>
<dbReference type="InterPro" id="IPR045186">
    <property type="entry name" value="Indole-3-glycerol_P_synth"/>
</dbReference>
<dbReference type="InterPro" id="IPR013798">
    <property type="entry name" value="Indole-3-glycerol_P_synth_dom"/>
</dbReference>
<dbReference type="InterPro" id="IPR001468">
    <property type="entry name" value="Indole-3-GlycerolPSynthase_CS"/>
</dbReference>
<dbReference type="InterPro" id="IPR011060">
    <property type="entry name" value="RibuloseP-bd_barrel"/>
</dbReference>
<dbReference type="NCBIfam" id="NF001373">
    <property type="entry name" value="PRK00278.1-6"/>
    <property type="match status" value="1"/>
</dbReference>
<dbReference type="NCBIfam" id="NF001377">
    <property type="entry name" value="PRK00278.2-4"/>
    <property type="match status" value="1"/>
</dbReference>
<dbReference type="PANTHER" id="PTHR22854:SF2">
    <property type="entry name" value="INDOLE-3-GLYCEROL-PHOSPHATE SYNTHASE"/>
    <property type="match status" value="1"/>
</dbReference>
<dbReference type="PANTHER" id="PTHR22854">
    <property type="entry name" value="TRYPTOPHAN BIOSYNTHESIS PROTEIN"/>
    <property type="match status" value="1"/>
</dbReference>
<dbReference type="Pfam" id="PF00218">
    <property type="entry name" value="IGPS"/>
    <property type="match status" value="1"/>
</dbReference>
<dbReference type="SUPFAM" id="SSF51366">
    <property type="entry name" value="Ribulose-phoshate binding barrel"/>
    <property type="match status" value="1"/>
</dbReference>
<dbReference type="PROSITE" id="PS00614">
    <property type="entry name" value="IGPS"/>
    <property type="match status" value="1"/>
</dbReference>
<organism>
    <name type="scientific">Burkholderia ambifaria (strain MC40-6)</name>
    <dbReference type="NCBI Taxonomy" id="398577"/>
    <lineage>
        <taxon>Bacteria</taxon>
        <taxon>Pseudomonadati</taxon>
        <taxon>Pseudomonadota</taxon>
        <taxon>Betaproteobacteria</taxon>
        <taxon>Burkholderiales</taxon>
        <taxon>Burkholderiaceae</taxon>
        <taxon>Burkholderia</taxon>
        <taxon>Burkholderia cepacia complex</taxon>
    </lineage>
</organism>
<evidence type="ECO:0000255" key="1">
    <source>
        <dbReference type="HAMAP-Rule" id="MF_00134"/>
    </source>
</evidence>
<comment type="catalytic activity">
    <reaction evidence="1">
        <text>1-(2-carboxyphenylamino)-1-deoxy-D-ribulose 5-phosphate + H(+) = (1S,2R)-1-C-(indol-3-yl)glycerol 3-phosphate + CO2 + H2O</text>
        <dbReference type="Rhea" id="RHEA:23476"/>
        <dbReference type="ChEBI" id="CHEBI:15377"/>
        <dbReference type="ChEBI" id="CHEBI:15378"/>
        <dbReference type="ChEBI" id="CHEBI:16526"/>
        <dbReference type="ChEBI" id="CHEBI:58613"/>
        <dbReference type="ChEBI" id="CHEBI:58866"/>
        <dbReference type="EC" id="4.1.1.48"/>
    </reaction>
</comment>
<comment type="pathway">
    <text evidence="1">Amino-acid biosynthesis; L-tryptophan biosynthesis; L-tryptophan from chorismate: step 4/5.</text>
</comment>
<comment type="similarity">
    <text evidence="1">Belongs to the TrpC family.</text>
</comment>
<accession>B1YSF5</accession>
<proteinExistence type="inferred from homology"/>
<keyword id="KW-0028">Amino-acid biosynthesis</keyword>
<keyword id="KW-0057">Aromatic amino acid biosynthesis</keyword>
<keyword id="KW-0210">Decarboxylase</keyword>
<keyword id="KW-0456">Lyase</keyword>
<keyword id="KW-0822">Tryptophan biosynthesis</keyword>
<name>TRPC_BURA4</name>
<reference key="1">
    <citation type="submission" date="2008-04" db="EMBL/GenBank/DDBJ databases">
        <title>Complete sequence of chromosome 1 of Burkholderia ambifaria MC40-6.</title>
        <authorList>
            <person name="Copeland A."/>
            <person name="Lucas S."/>
            <person name="Lapidus A."/>
            <person name="Glavina del Rio T."/>
            <person name="Dalin E."/>
            <person name="Tice H."/>
            <person name="Pitluck S."/>
            <person name="Chain P."/>
            <person name="Malfatti S."/>
            <person name="Shin M."/>
            <person name="Vergez L."/>
            <person name="Lang D."/>
            <person name="Schmutz J."/>
            <person name="Larimer F."/>
            <person name="Land M."/>
            <person name="Hauser L."/>
            <person name="Kyrpides N."/>
            <person name="Lykidis A."/>
            <person name="Ramette A."/>
            <person name="Konstantinidis K."/>
            <person name="Tiedje J."/>
            <person name="Richardson P."/>
        </authorList>
    </citation>
    <scope>NUCLEOTIDE SEQUENCE [LARGE SCALE GENOMIC DNA]</scope>
    <source>
        <strain>MC40-6</strain>
    </source>
</reference>
<gene>
    <name evidence="1" type="primary">trpC</name>
    <name type="ordered locus">BamMC406_0460</name>
</gene>
<sequence length="261" mass="28555">MSDILDRIIAVKREEVAAAMRSAPLEALKLEASARDLRDFVGALRAKQAAGHAAVIAEVKKASPSKGVLREHFVPADIARSYAAHGAACLSVLTDEQFFQGSVRYLEEARAACTLPVLRKDFIVDAYQILEARAMGADAILLIAAALDTPLMQDLEAYAHSLGLAVLVEVHDRDEMEQALTLKTPLLGINNRNLRTFETSIQTTLDMLDMIPPERMVVTESGILSRTDVDTMRAANVNAFLVGEAFMRADQPGEELARMFF</sequence>
<feature type="chain" id="PRO_1000095853" description="Indole-3-glycerol phosphate synthase">
    <location>
        <begin position="1"/>
        <end position="261"/>
    </location>
</feature>
<protein>
    <recommendedName>
        <fullName evidence="1">Indole-3-glycerol phosphate synthase</fullName>
        <shortName evidence="1">IGPS</shortName>
        <ecNumber evidence="1">4.1.1.48</ecNumber>
    </recommendedName>
</protein>